<proteinExistence type="inferred from homology"/>
<dbReference type="EC" id="2.7.4.25" evidence="1"/>
<dbReference type="EMBL" id="AE017245">
    <property type="protein sequence ID" value="AAZ43563.2"/>
    <property type="molecule type" value="Genomic_DNA"/>
</dbReference>
<dbReference type="RefSeq" id="WP_041351849.1">
    <property type="nucleotide sequence ID" value="NC_007294.1"/>
</dbReference>
<dbReference type="SMR" id="Q4A6Q8"/>
<dbReference type="STRING" id="262723.MS53_0143"/>
<dbReference type="KEGG" id="msy:MS53_0143"/>
<dbReference type="eggNOG" id="COG0283">
    <property type="taxonomic scope" value="Bacteria"/>
</dbReference>
<dbReference type="HOGENOM" id="CLU_079959_0_2_14"/>
<dbReference type="Proteomes" id="UP000000549">
    <property type="component" value="Chromosome"/>
</dbReference>
<dbReference type="GO" id="GO:0005737">
    <property type="term" value="C:cytoplasm"/>
    <property type="evidence" value="ECO:0007669"/>
    <property type="project" value="UniProtKB-SubCell"/>
</dbReference>
<dbReference type="GO" id="GO:0005524">
    <property type="term" value="F:ATP binding"/>
    <property type="evidence" value="ECO:0007669"/>
    <property type="project" value="UniProtKB-UniRule"/>
</dbReference>
<dbReference type="GO" id="GO:0036430">
    <property type="term" value="F:CMP kinase activity"/>
    <property type="evidence" value="ECO:0007669"/>
    <property type="project" value="RHEA"/>
</dbReference>
<dbReference type="GO" id="GO:0036431">
    <property type="term" value="F:dCMP kinase activity"/>
    <property type="evidence" value="ECO:0007669"/>
    <property type="project" value="RHEA"/>
</dbReference>
<dbReference type="GO" id="GO:0006220">
    <property type="term" value="P:pyrimidine nucleotide metabolic process"/>
    <property type="evidence" value="ECO:0007669"/>
    <property type="project" value="UniProtKB-UniRule"/>
</dbReference>
<dbReference type="CDD" id="cd02020">
    <property type="entry name" value="CMPK"/>
    <property type="match status" value="1"/>
</dbReference>
<dbReference type="Gene3D" id="3.40.50.300">
    <property type="entry name" value="P-loop containing nucleotide triphosphate hydrolases"/>
    <property type="match status" value="1"/>
</dbReference>
<dbReference type="HAMAP" id="MF_00238">
    <property type="entry name" value="Cytidyl_kinase_type1"/>
    <property type="match status" value="1"/>
</dbReference>
<dbReference type="InterPro" id="IPR003136">
    <property type="entry name" value="Cytidylate_kin"/>
</dbReference>
<dbReference type="InterPro" id="IPR011994">
    <property type="entry name" value="Cytidylate_kinase_dom"/>
</dbReference>
<dbReference type="InterPro" id="IPR027417">
    <property type="entry name" value="P-loop_NTPase"/>
</dbReference>
<dbReference type="NCBIfam" id="TIGR00017">
    <property type="entry name" value="cmk"/>
    <property type="match status" value="1"/>
</dbReference>
<dbReference type="Pfam" id="PF02224">
    <property type="entry name" value="Cytidylate_kin"/>
    <property type="match status" value="1"/>
</dbReference>
<dbReference type="SUPFAM" id="SSF52540">
    <property type="entry name" value="P-loop containing nucleoside triphosphate hydrolases"/>
    <property type="match status" value="1"/>
</dbReference>
<keyword id="KW-0067">ATP-binding</keyword>
<keyword id="KW-0963">Cytoplasm</keyword>
<keyword id="KW-0418">Kinase</keyword>
<keyword id="KW-0547">Nucleotide-binding</keyword>
<keyword id="KW-1185">Reference proteome</keyword>
<keyword id="KW-0808">Transferase</keyword>
<comment type="catalytic activity">
    <reaction evidence="1">
        <text>CMP + ATP = CDP + ADP</text>
        <dbReference type="Rhea" id="RHEA:11600"/>
        <dbReference type="ChEBI" id="CHEBI:30616"/>
        <dbReference type="ChEBI" id="CHEBI:58069"/>
        <dbReference type="ChEBI" id="CHEBI:60377"/>
        <dbReference type="ChEBI" id="CHEBI:456216"/>
        <dbReference type="EC" id="2.7.4.25"/>
    </reaction>
</comment>
<comment type="catalytic activity">
    <reaction evidence="1">
        <text>dCMP + ATP = dCDP + ADP</text>
        <dbReference type="Rhea" id="RHEA:25094"/>
        <dbReference type="ChEBI" id="CHEBI:30616"/>
        <dbReference type="ChEBI" id="CHEBI:57566"/>
        <dbReference type="ChEBI" id="CHEBI:58593"/>
        <dbReference type="ChEBI" id="CHEBI:456216"/>
        <dbReference type="EC" id="2.7.4.25"/>
    </reaction>
</comment>
<comment type="subcellular location">
    <subcellularLocation>
        <location evidence="1">Cytoplasm</location>
    </subcellularLocation>
</comment>
<comment type="similarity">
    <text evidence="1">Belongs to the cytidylate kinase family. Type 1 subfamily.</text>
</comment>
<sequence>MELKVNIAIDGPSGVGKSTVSKLIAKKLNYTFINSGSIYRTIAYHVIKNDIDINNEKDVISSLDSLEFSLSKNEELFYKGENITLILRSEQISISTPVVSKIPEVREFVTSYIQKMTKGKKGFIIDGRDTTFKVMPHADVKIFLWATAEERAQRRVDQNHQLGYNSNYDEVLYEIKKRDHQDMNREHDPLHKTEDSILIDCTNMKIDEVVNKIISLIK</sequence>
<evidence type="ECO:0000255" key="1">
    <source>
        <dbReference type="HAMAP-Rule" id="MF_00238"/>
    </source>
</evidence>
<organism>
    <name type="scientific">Mycoplasmopsis synoviae (strain 53)</name>
    <name type="common">Mycoplasma synoviae</name>
    <dbReference type="NCBI Taxonomy" id="262723"/>
    <lineage>
        <taxon>Bacteria</taxon>
        <taxon>Bacillati</taxon>
        <taxon>Mycoplasmatota</taxon>
        <taxon>Mycoplasmoidales</taxon>
        <taxon>Metamycoplasmataceae</taxon>
        <taxon>Mycoplasmopsis</taxon>
    </lineage>
</organism>
<reference key="1">
    <citation type="journal article" date="2005" name="J. Bacteriol.">
        <title>Swine and poultry pathogens: the complete genome sequences of two strains of Mycoplasma hyopneumoniae and a strain of Mycoplasma synoviae.</title>
        <authorList>
            <person name="Vasconcelos A.T.R."/>
            <person name="Ferreira H.B."/>
            <person name="Bizarro C.V."/>
            <person name="Bonatto S.L."/>
            <person name="Carvalho M.O."/>
            <person name="Pinto P.M."/>
            <person name="Almeida D.F."/>
            <person name="Almeida L.G.P."/>
            <person name="Almeida R."/>
            <person name="Alves-Junior L."/>
            <person name="Assuncao E.N."/>
            <person name="Azevedo V.A.C."/>
            <person name="Bogo M.R."/>
            <person name="Brigido M.M."/>
            <person name="Brocchi M."/>
            <person name="Burity H.A."/>
            <person name="Camargo A.A."/>
            <person name="Camargo S.S."/>
            <person name="Carepo M.S."/>
            <person name="Carraro D.M."/>
            <person name="de Mattos Cascardo J.C."/>
            <person name="Castro L.A."/>
            <person name="Cavalcanti G."/>
            <person name="Chemale G."/>
            <person name="Collevatti R.G."/>
            <person name="Cunha C.W."/>
            <person name="Dallagiovanna B."/>
            <person name="Dambros B.P."/>
            <person name="Dellagostin O.A."/>
            <person name="Falcao C."/>
            <person name="Fantinatti-Garboggini F."/>
            <person name="Felipe M.S.S."/>
            <person name="Fiorentin L."/>
            <person name="Franco G.R."/>
            <person name="Freitas N.S.A."/>
            <person name="Frias D."/>
            <person name="Grangeiro T.B."/>
            <person name="Grisard E.C."/>
            <person name="Guimaraes C.T."/>
            <person name="Hungria M."/>
            <person name="Jardim S.N."/>
            <person name="Krieger M.A."/>
            <person name="Laurino J.P."/>
            <person name="Lima L.F.A."/>
            <person name="Lopes M.I."/>
            <person name="Loreto E.L.S."/>
            <person name="Madeira H.M.F."/>
            <person name="Manfio G.P."/>
            <person name="Maranhao A.Q."/>
            <person name="Martinkovics C.T."/>
            <person name="Medeiros S.R.B."/>
            <person name="Moreira M.A.M."/>
            <person name="Neiva M."/>
            <person name="Ramalho-Neto C.E."/>
            <person name="Nicolas M.F."/>
            <person name="Oliveira S.C."/>
            <person name="Paixao R.F.C."/>
            <person name="Pedrosa F.O."/>
            <person name="Pena S.D.J."/>
            <person name="Pereira M."/>
            <person name="Pereira-Ferrari L."/>
            <person name="Piffer I."/>
            <person name="Pinto L.S."/>
            <person name="Potrich D.P."/>
            <person name="Salim A.C.M."/>
            <person name="Santos F.R."/>
            <person name="Schmitt R."/>
            <person name="Schneider M.P.C."/>
            <person name="Schrank A."/>
            <person name="Schrank I.S."/>
            <person name="Schuck A.F."/>
            <person name="Seuanez H.N."/>
            <person name="Silva D.W."/>
            <person name="Silva R."/>
            <person name="Silva S.C."/>
            <person name="Soares C.M.A."/>
            <person name="Souza K.R.L."/>
            <person name="Souza R.C."/>
            <person name="Staats C.C."/>
            <person name="Steffens M.B.R."/>
            <person name="Teixeira S.M.R."/>
            <person name="Urmenyi T.P."/>
            <person name="Vainstein M.H."/>
            <person name="Zuccherato L.W."/>
            <person name="Simpson A.J.G."/>
            <person name="Zaha A."/>
        </authorList>
    </citation>
    <scope>NUCLEOTIDE SEQUENCE [LARGE SCALE GENOMIC DNA]</scope>
    <source>
        <strain>53</strain>
    </source>
</reference>
<feature type="chain" id="PRO_1000048238" description="Cytidylate kinase">
    <location>
        <begin position="1"/>
        <end position="218"/>
    </location>
</feature>
<feature type="binding site" evidence="1">
    <location>
        <begin position="11"/>
        <end position="19"/>
    </location>
    <ligand>
        <name>ATP</name>
        <dbReference type="ChEBI" id="CHEBI:30616"/>
    </ligand>
</feature>
<gene>
    <name evidence="1" type="primary">cmk</name>
    <name type="ordered locus">MS53_0143</name>
</gene>
<protein>
    <recommendedName>
        <fullName evidence="1">Cytidylate kinase</fullName>
        <shortName evidence="1">CK</shortName>
        <ecNumber evidence="1">2.7.4.25</ecNumber>
    </recommendedName>
    <alternativeName>
        <fullName evidence="1">Cytidine monophosphate kinase</fullName>
        <shortName evidence="1">CMP kinase</shortName>
    </alternativeName>
</protein>
<accession>Q4A6Q8</accession>
<name>KCY_MYCS5</name>